<sequence length="78" mass="8833">MTRHLIFAAVLLVCLFVCWNAVGAQDARSAFSSEETAQDQHVMEERIFINPAGNREKNACMENCRSSPNCKNYEFCSK</sequence>
<dbReference type="EMBL" id="KF130725">
    <property type="protein sequence ID" value="AHY22576.1"/>
    <property type="molecule type" value="mRNA"/>
</dbReference>
<dbReference type="EMBL" id="KF130726">
    <property type="protein sequence ID" value="AHY22577.1"/>
    <property type="molecule type" value="mRNA"/>
</dbReference>
<dbReference type="EMBL" id="KF130730">
    <property type="protein sequence ID" value="AHY22581.1"/>
    <property type="molecule type" value="mRNA"/>
</dbReference>
<dbReference type="GO" id="GO:0005576">
    <property type="term" value="C:extracellular region"/>
    <property type="evidence" value="ECO:0007669"/>
    <property type="project" value="UniProtKB-SubCell"/>
</dbReference>
<dbReference type="GO" id="GO:0090729">
    <property type="term" value="F:toxin activity"/>
    <property type="evidence" value="ECO:0007669"/>
    <property type="project" value="UniProtKB-KW"/>
</dbReference>
<protein>
    <recommendedName>
        <fullName evidence="5">U-scoloptoxin(04)-Er1b</fullName>
        <shortName evidence="5">U-SLPTX(04)-Er1b</shortName>
    </recommendedName>
    <alternativeName>
        <fullName evidence="7">U-scoloptoxin-Er1.1a2b</fullName>
        <shortName evidence="7">U-SLPTX-Er1.1a2b</shortName>
    </alternativeName>
    <component>
        <recommendedName>
            <fullName evidence="4">U-scoloptoxin-Er1.1a</fullName>
        </recommendedName>
    </component>
    <component>
        <recommendedName>
            <fullName evidence="4">U-scoloptoxin-Er1.2b</fullName>
        </recommendedName>
    </component>
</protein>
<feature type="signal peptide" evidence="2">
    <location>
        <begin position="1"/>
        <end position="24"/>
    </location>
</feature>
<feature type="propeptide" id="PRO_0000446699" evidence="6">
    <location>
        <begin position="25"/>
        <end position="28"/>
    </location>
</feature>
<feature type="peptide" id="PRO_5007368302" description="U-scoloptoxin-Er1.1a" evidence="3">
    <location>
        <begin position="29"/>
        <end position="46"/>
    </location>
</feature>
<feature type="chain" id="PRO_0000446700" description="U-scoloptoxin-Er1.2b" evidence="1">
    <location>
        <begin position="47"/>
        <end position="77"/>
    </location>
</feature>
<organism>
    <name type="scientific">Ethmostigmus rubripes</name>
    <name type="common">Giant centipede</name>
    <dbReference type="NCBI Taxonomy" id="62613"/>
    <lineage>
        <taxon>Eukaryota</taxon>
        <taxon>Metazoa</taxon>
        <taxon>Ecdysozoa</taxon>
        <taxon>Arthropoda</taxon>
        <taxon>Myriapoda</taxon>
        <taxon>Chilopoda</taxon>
        <taxon>Pleurostigmophora</taxon>
        <taxon>Scolopendromorpha</taxon>
        <taxon>Scolopendridae</taxon>
        <taxon>Ethmostigmus</taxon>
    </lineage>
</organism>
<accession>A0A023W082</accession>
<accession>A0A023W078</accession>
<reference key="1">
    <citation type="journal article" date="2014" name="J. Proteomics">
        <title>Multifunctional warheads: diversification of the toxin arsenal of centipedes via novel multidomain transcripts.</title>
        <authorList>
            <person name="Undheim E.A."/>
            <person name="Sunagar K."/>
            <person name="Hamilton B.R."/>
            <person name="Jones A."/>
            <person name="Venter D.J."/>
            <person name="Fry B.G."/>
            <person name="King G.F."/>
        </authorList>
    </citation>
    <scope>NUCLEOTIDE SEQUENCE [MRNA]</scope>
    <scope>PROTEIN SEQUENCE OF 29-46 AND 47-77</scope>
    <scope>IDENTIFICATION BY MASS SPECTROMETRY</scope>
    <scope>SUBCELLULAR LOCATION</scope>
    <source>
        <tissue>Venom</tissue>
        <tissue>Venom gland</tissue>
    </source>
</reference>
<keyword id="KW-0903">Direct protein sequencing</keyword>
<keyword id="KW-1015">Disulfide bond</keyword>
<keyword id="KW-0964">Secreted</keyword>
<keyword id="KW-0732">Signal</keyword>
<keyword id="KW-0800">Toxin</keyword>
<evidence type="ECO:0000250" key="1">
    <source>
        <dbReference type="UniProtKB" id="A0A023VZM6"/>
    </source>
</evidence>
<evidence type="ECO:0000255" key="2"/>
<evidence type="ECO:0000269" key="3">
    <source>
    </source>
</evidence>
<evidence type="ECO:0000303" key="4">
    <source>
    </source>
</evidence>
<evidence type="ECO:0000305" key="5"/>
<evidence type="ECO:0000305" key="6">
    <source>
    </source>
</evidence>
<evidence type="ECO:0000312" key="7">
    <source>
        <dbReference type="EMBL" id="AHY22581.1"/>
    </source>
</evidence>
<proteinExistence type="evidence at protein level"/>
<name>TX41B_ETHRU</name>
<comment type="subcellular location">
    <subcellularLocation>
        <location evidence="3">Secreted</location>
    </subcellularLocation>
    <text evidence="3">The mature toxins are clearly liberated from the multidomain precursors in the venom gland prior to venom expulsion and not by venom proteases upon secretion.</text>
</comment>
<comment type="tissue specificity">
    <text evidence="6">Expressed by the venom gland.</text>
</comment>
<comment type="PTM">
    <text evidence="5">Contains 2 disulfide bonds.</text>
</comment>
<comment type="similarity">
    <text evidence="5">Belongs to the scoloptoxin-04 family.</text>
</comment>